<proteinExistence type="evidence at protein level"/>
<comment type="interaction">
    <interactant intactId="EBI-3910072">
        <id>P49863</id>
    </interactant>
    <interactant intactId="EBI-1045825">
        <id>P55061</id>
        <label>TMBIM6</label>
    </interactant>
    <organismsDiffer>false</organismsDiffer>
    <experiments>3</experiments>
</comment>
<comment type="subcellular location">
    <subcellularLocation>
        <location>Secreted</location>
    </subcellularLocation>
    <subcellularLocation>
        <location>Cytoplasmic granule</location>
    </subcellularLocation>
</comment>
<comment type="tissue specificity">
    <text>Expressed in lung, spleen, thymus and peripheral blood leukocytes.</text>
</comment>
<comment type="similarity">
    <text evidence="2">Belongs to the peptidase S1 family. Granzyme subfamily.</text>
</comment>
<protein>
    <recommendedName>
        <fullName>Granzyme K</fullName>
        <ecNumber>3.4.21.-</ecNumber>
    </recommendedName>
    <alternativeName>
        <fullName>Fragmentin-3</fullName>
    </alternativeName>
    <alternativeName>
        <fullName>Granzyme-3</fullName>
    </alternativeName>
    <alternativeName>
        <fullName>NK-tryptase-2</fullName>
        <shortName>NK-Tryp-2</shortName>
    </alternativeName>
</protein>
<gene>
    <name type="primary">GZMK</name>
    <name type="synonym">TRYP2</name>
</gene>
<organism>
    <name type="scientific">Homo sapiens</name>
    <name type="common">Human</name>
    <dbReference type="NCBI Taxonomy" id="9606"/>
    <lineage>
        <taxon>Eukaryota</taxon>
        <taxon>Metazoa</taxon>
        <taxon>Chordata</taxon>
        <taxon>Craniata</taxon>
        <taxon>Vertebrata</taxon>
        <taxon>Euteleostomi</taxon>
        <taxon>Mammalia</taxon>
        <taxon>Eutheria</taxon>
        <taxon>Euarchontoglires</taxon>
        <taxon>Primates</taxon>
        <taxon>Haplorrhini</taxon>
        <taxon>Catarrhini</taxon>
        <taxon>Hominidae</taxon>
        <taxon>Homo</taxon>
    </lineage>
</organism>
<dbReference type="EC" id="3.4.21.-"/>
<dbReference type="EMBL" id="U35237">
    <property type="protein sequence ID" value="AAA79063.1"/>
    <property type="molecule type" value="mRNA"/>
</dbReference>
<dbReference type="EMBL" id="U26174">
    <property type="protein sequence ID" value="AAA74578.1"/>
    <property type="molecule type" value="mRNA"/>
</dbReference>
<dbReference type="EMBL" id="AK312074">
    <property type="protein sequence ID" value="BAG35010.1"/>
    <property type="molecule type" value="mRNA"/>
</dbReference>
<dbReference type="EMBL" id="CH471123">
    <property type="protein sequence ID" value="EAW54899.1"/>
    <property type="molecule type" value="Genomic_DNA"/>
</dbReference>
<dbReference type="EMBL" id="BC035802">
    <property type="protein sequence ID" value="AAH35802.1"/>
    <property type="molecule type" value="mRNA"/>
</dbReference>
<dbReference type="CCDS" id="CCDS3964.1"/>
<dbReference type="PIR" id="S65663">
    <property type="entry name" value="S65663"/>
</dbReference>
<dbReference type="RefSeq" id="NP_002095.1">
    <property type="nucleotide sequence ID" value="NM_002104.3"/>
</dbReference>
<dbReference type="PDB" id="1MZA">
    <property type="method" value="X-ray"/>
    <property type="resolution" value="2.23 A"/>
    <property type="chains" value="A=25-264"/>
</dbReference>
<dbReference type="PDB" id="1MZD">
    <property type="method" value="X-ray"/>
    <property type="resolution" value="2.90 A"/>
    <property type="chains" value="A=25-264"/>
</dbReference>
<dbReference type="PDBsum" id="1MZA"/>
<dbReference type="PDBsum" id="1MZD"/>
<dbReference type="SMR" id="P49863"/>
<dbReference type="BioGRID" id="109258">
    <property type="interactions" value="18"/>
</dbReference>
<dbReference type="FunCoup" id="P49863">
    <property type="interactions" value="57"/>
</dbReference>
<dbReference type="IntAct" id="P49863">
    <property type="interactions" value="5"/>
</dbReference>
<dbReference type="STRING" id="9606.ENSP00000231009"/>
<dbReference type="BindingDB" id="P49863"/>
<dbReference type="ChEMBL" id="CHEMBL4930"/>
<dbReference type="MEROPS" id="S01.146"/>
<dbReference type="iPTMnet" id="P49863"/>
<dbReference type="PhosphoSitePlus" id="P49863"/>
<dbReference type="BioMuta" id="GZMK"/>
<dbReference type="DMDM" id="1708035"/>
<dbReference type="MassIVE" id="P49863"/>
<dbReference type="PaxDb" id="9606-ENSP00000231009"/>
<dbReference type="PeptideAtlas" id="P49863"/>
<dbReference type="ProteomicsDB" id="56162"/>
<dbReference type="TopDownProteomics" id="P49863"/>
<dbReference type="Antibodypedia" id="11044">
    <property type="antibodies" value="309 antibodies from 33 providers"/>
</dbReference>
<dbReference type="DNASU" id="3003"/>
<dbReference type="Ensembl" id="ENST00000231009.3">
    <property type="protein sequence ID" value="ENSP00000231009.2"/>
    <property type="gene ID" value="ENSG00000113088.6"/>
</dbReference>
<dbReference type="GeneID" id="3003"/>
<dbReference type="KEGG" id="hsa:3003"/>
<dbReference type="MANE-Select" id="ENST00000231009.3">
    <property type="protein sequence ID" value="ENSP00000231009.2"/>
    <property type="RefSeq nucleotide sequence ID" value="NM_002104.3"/>
    <property type="RefSeq protein sequence ID" value="NP_002095.1"/>
</dbReference>
<dbReference type="UCSC" id="uc003jpl.2">
    <property type="organism name" value="human"/>
</dbReference>
<dbReference type="AGR" id="HGNC:4711"/>
<dbReference type="CTD" id="3003"/>
<dbReference type="DisGeNET" id="3003"/>
<dbReference type="GeneCards" id="GZMK"/>
<dbReference type="HGNC" id="HGNC:4711">
    <property type="gene designation" value="GZMK"/>
</dbReference>
<dbReference type="HPA" id="ENSG00000113088">
    <property type="expression patterns" value="Tissue enriched (lymphoid)"/>
</dbReference>
<dbReference type="MIM" id="600784">
    <property type="type" value="gene"/>
</dbReference>
<dbReference type="neXtProt" id="NX_P49863"/>
<dbReference type="OpenTargets" id="ENSG00000113088"/>
<dbReference type="PharmGKB" id="PA29089"/>
<dbReference type="VEuPathDB" id="HostDB:ENSG00000113088"/>
<dbReference type="eggNOG" id="KOG3627">
    <property type="taxonomic scope" value="Eukaryota"/>
</dbReference>
<dbReference type="GeneTree" id="ENSGT00940000161886"/>
<dbReference type="HOGENOM" id="CLU_006842_1_0_1"/>
<dbReference type="InParanoid" id="P49863"/>
<dbReference type="OMA" id="KYQAWIK"/>
<dbReference type="OrthoDB" id="10059102at2759"/>
<dbReference type="PAN-GO" id="P49863">
    <property type="GO annotations" value="0 GO annotations based on evolutionary models"/>
</dbReference>
<dbReference type="PhylomeDB" id="P49863"/>
<dbReference type="TreeFam" id="TF333630"/>
<dbReference type="BRENDA" id="3.4.21.B4">
    <property type="organism ID" value="2681"/>
</dbReference>
<dbReference type="PathwayCommons" id="P49863"/>
<dbReference type="SignaLink" id="P49863"/>
<dbReference type="BioGRID-ORCS" id="3003">
    <property type="hits" value="12 hits in 1143 CRISPR screens"/>
</dbReference>
<dbReference type="ChiTaRS" id="GZMK">
    <property type="organism name" value="human"/>
</dbReference>
<dbReference type="EvolutionaryTrace" id="P49863"/>
<dbReference type="GeneWiki" id="GZMK"/>
<dbReference type="GenomeRNAi" id="3003"/>
<dbReference type="Pharos" id="P49863">
    <property type="development level" value="Tbio"/>
</dbReference>
<dbReference type="PRO" id="PR:P49863"/>
<dbReference type="Proteomes" id="UP000005640">
    <property type="component" value="Chromosome 5"/>
</dbReference>
<dbReference type="RNAct" id="P49863">
    <property type="molecule type" value="protein"/>
</dbReference>
<dbReference type="Bgee" id="ENSG00000113088">
    <property type="expression patterns" value="Expressed in lymph node and 140 other cell types or tissues"/>
</dbReference>
<dbReference type="GO" id="GO:0005615">
    <property type="term" value="C:extracellular space"/>
    <property type="evidence" value="ECO:0000318"/>
    <property type="project" value="GO_Central"/>
</dbReference>
<dbReference type="GO" id="GO:0004252">
    <property type="term" value="F:serine-type endopeptidase activity"/>
    <property type="evidence" value="ECO:0000314"/>
    <property type="project" value="UniProtKB"/>
</dbReference>
<dbReference type="GO" id="GO:0008236">
    <property type="term" value="F:serine-type peptidase activity"/>
    <property type="evidence" value="ECO:0000304"/>
    <property type="project" value="ProtInc"/>
</dbReference>
<dbReference type="GO" id="GO:0140507">
    <property type="term" value="P:granzyme-mediated programmed cell death signaling pathway"/>
    <property type="evidence" value="ECO:0000318"/>
    <property type="project" value="GO_Central"/>
</dbReference>
<dbReference type="GO" id="GO:0051604">
    <property type="term" value="P:protein maturation"/>
    <property type="evidence" value="ECO:0000318"/>
    <property type="project" value="GO_Central"/>
</dbReference>
<dbReference type="GO" id="GO:0006508">
    <property type="term" value="P:proteolysis"/>
    <property type="evidence" value="ECO:0007669"/>
    <property type="project" value="UniProtKB-KW"/>
</dbReference>
<dbReference type="CDD" id="cd00190">
    <property type="entry name" value="Tryp_SPc"/>
    <property type="match status" value="1"/>
</dbReference>
<dbReference type="FunFam" id="2.40.10.10:FF:000003">
    <property type="entry name" value="Transmembrane serine protease 3"/>
    <property type="match status" value="1"/>
</dbReference>
<dbReference type="Gene3D" id="2.40.10.10">
    <property type="entry name" value="Trypsin-like serine proteases"/>
    <property type="match status" value="2"/>
</dbReference>
<dbReference type="InterPro" id="IPR009003">
    <property type="entry name" value="Peptidase_S1_PA"/>
</dbReference>
<dbReference type="InterPro" id="IPR043504">
    <property type="entry name" value="Peptidase_S1_PA_chymotrypsin"/>
</dbReference>
<dbReference type="InterPro" id="IPR001314">
    <property type="entry name" value="Peptidase_S1A"/>
</dbReference>
<dbReference type="InterPro" id="IPR001254">
    <property type="entry name" value="Trypsin_dom"/>
</dbReference>
<dbReference type="InterPro" id="IPR018114">
    <property type="entry name" value="TRYPSIN_HIS"/>
</dbReference>
<dbReference type="InterPro" id="IPR033116">
    <property type="entry name" value="TRYPSIN_SER"/>
</dbReference>
<dbReference type="PANTHER" id="PTHR24271:SF52">
    <property type="entry name" value="GRANZYME K"/>
    <property type="match status" value="1"/>
</dbReference>
<dbReference type="PANTHER" id="PTHR24271">
    <property type="entry name" value="KALLIKREIN-RELATED"/>
    <property type="match status" value="1"/>
</dbReference>
<dbReference type="Pfam" id="PF00089">
    <property type="entry name" value="Trypsin"/>
    <property type="match status" value="1"/>
</dbReference>
<dbReference type="PRINTS" id="PR00722">
    <property type="entry name" value="CHYMOTRYPSIN"/>
</dbReference>
<dbReference type="SMART" id="SM00020">
    <property type="entry name" value="Tryp_SPc"/>
    <property type="match status" value="1"/>
</dbReference>
<dbReference type="SUPFAM" id="SSF50494">
    <property type="entry name" value="Trypsin-like serine proteases"/>
    <property type="match status" value="1"/>
</dbReference>
<dbReference type="PROSITE" id="PS50240">
    <property type="entry name" value="TRYPSIN_DOM"/>
    <property type="match status" value="1"/>
</dbReference>
<dbReference type="PROSITE" id="PS00134">
    <property type="entry name" value="TRYPSIN_HIS"/>
    <property type="match status" value="1"/>
</dbReference>
<dbReference type="PROSITE" id="PS00135">
    <property type="entry name" value="TRYPSIN_SER"/>
    <property type="match status" value="1"/>
</dbReference>
<accession>P49863</accession>
<accession>B2R563</accession>
<keyword id="KW-0002">3D-structure</keyword>
<keyword id="KW-0903">Direct protein sequencing</keyword>
<keyword id="KW-1015">Disulfide bond</keyword>
<keyword id="KW-0378">Hydrolase</keyword>
<keyword id="KW-0645">Protease</keyword>
<keyword id="KW-1267">Proteomics identification</keyword>
<keyword id="KW-1185">Reference proteome</keyword>
<keyword id="KW-0964">Secreted</keyword>
<keyword id="KW-0720">Serine protease</keyword>
<keyword id="KW-0732">Signal</keyword>
<keyword id="KW-0865">Zymogen</keyword>
<reference key="1">
    <citation type="journal article" date="1995" name="FEBS Lett.">
        <title>Cloning of cDNA for human granzyme 3.</title>
        <authorList>
            <person name="Przetak M.M."/>
            <person name="Yoast S."/>
            <person name="Schmidt B.F."/>
        </authorList>
    </citation>
    <scope>NUCLEOTIDE SEQUENCE [MRNA]</scope>
    <source>
        <tissue>Ascites</tissue>
    </source>
</reference>
<reference key="2">
    <citation type="journal article" date="1996" name="J. Leukoc. Biol.">
        <title>Cloning and expression of a second human natural killer cell granule tryptase, HNK-Tryp-2/granzyme 3.</title>
        <authorList>
            <person name="Sayers T.J."/>
            <person name="Lloyd A.R."/>
            <person name="McVicar D.W."/>
            <person name="O'Connor M.D."/>
            <person name="Kelly J.M."/>
            <person name="Carter C.R.D."/>
            <person name="Wiltrout T.A."/>
            <person name="Wiltrout R.H."/>
            <person name="Smyth M.J."/>
        </authorList>
    </citation>
    <scope>NUCLEOTIDE SEQUENCE [MRNA]</scope>
    <source>
        <tissue>Lymphocyte</tissue>
    </source>
</reference>
<reference key="3">
    <citation type="journal article" date="2004" name="Nat. Genet.">
        <title>Complete sequencing and characterization of 21,243 full-length human cDNAs.</title>
        <authorList>
            <person name="Ota T."/>
            <person name="Suzuki Y."/>
            <person name="Nishikawa T."/>
            <person name="Otsuki T."/>
            <person name="Sugiyama T."/>
            <person name="Irie R."/>
            <person name="Wakamatsu A."/>
            <person name="Hayashi K."/>
            <person name="Sato H."/>
            <person name="Nagai K."/>
            <person name="Kimura K."/>
            <person name="Makita H."/>
            <person name="Sekine M."/>
            <person name="Obayashi M."/>
            <person name="Nishi T."/>
            <person name="Shibahara T."/>
            <person name="Tanaka T."/>
            <person name="Ishii S."/>
            <person name="Yamamoto J."/>
            <person name="Saito K."/>
            <person name="Kawai Y."/>
            <person name="Isono Y."/>
            <person name="Nakamura Y."/>
            <person name="Nagahari K."/>
            <person name="Murakami K."/>
            <person name="Yasuda T."/>
            <person name="Iwayanagi T."/>
            <person name="Wagatsuma M."/>
            <person name="Shiratori A."/>
            <person name="Sudo H."/>
            <person name="Hosoiri T."/>
            <person name="Kaku Y."/>
            <person name="Kodaira H."/>
            <person name="Kondo H."/>
            <person name="Sugawara M."/>
            <person name="Takahashi M."/>
            <person name="Kanda K."/>
            <person name="Yokoi T."/>
            <person name="Furuya T."/>
            <person name="Kikkawa E."/>
            <person name="Omura Y."/>
            <person name="Abe K."/>
            <person name="Kamihara K."/>
            <person name="Katsuta N."/>
            <person name="Sato K."/>
            <person name="Tanikawa M."/>
            <person name="Yamazaki M."/>
            <person name="Ninomiya K."/>
            <person name="Ishibashi T."/>
            <person name="Yamashita H."/>
            <person name="Murakawa K."/>
            <person name="Fujimori K."/>
            <person name="Tanai H."/>
            <person name="Kimata M."/>
            <person name="Watanabe M."/>
            <person name="Hiraoka S."/>
            <person name="Chiba Y."/>
            <person name="Ishida S."/>
            <person name="Ono Y."/>
            <person name="Takiguchi S."/>
            <person name="Watanabe S."/>
            <person name="Yosida M."/>
            <person name="Hotuta T."/>
            <person name="Kusano J."/>
            <person name="Kanehori K."/>
            <person name="Takahashi-Fujii A."/>
            <person name="Hara H."/>
            <person name="Tanase T.-O."/>
            <person name="Nomura Y."/>
            <person name="Togiya S."/>
            <person name="Komai F."/>
            <person name="Hara R."/>
            <person name="Takeuchi K."/>
            <person name="Arita M."/>
            <person name="Imose N."/>
            <person name="Musashino K."/>
            <person name="Yuuki H."/>
            <person name="Oshima A."/>
            <person name="Sasaki N."/>
            <person name="Aotsuka S."/>
            <person name="Yoshikawa Y."/>
            <person name="Matsunawa H."/>
            <person name="Ichihara T."/>
            <person name="Shiohata N."/>
            <person name="Sano S."/>
            <person name="Moriya S."/>
            <person name="Momiyama H."/>
            <person name="Satoh N."/>
            <person name="Takami S."/>
            <person name="Terashima Y."/>
            <person name="Suzuki O."/>
            <person name="Nakagawa S."/>
            <person name="Senoh A."/>
            <person name="Mizoguchi H."/>
            <person name="Goto Y."/>
            <person name="Shimizu F."/>
            <person name="Wakebe H."/>
            <person name="Hishigaki H."/>
            <person name="Watanabe T."/>
            <person name="Sugiyama A."/>
            <person name="Takemoto M."/>
            <person name="Kawakami B."/>
            <person name="Yamazaki M."/>
            <person name="Watanabe K."/>
            <person name="Kumagai A."/>
            <person name="Itakura S."/>
            <person name="Fukuzumi Y."/>
            <person name="Fujimori Y."/>
            <person name="Komiyama M."/>
            <person name="Tashiro H."/>
            <person name="Tanigami A."/>
            <person name="Fujiwara T."/>
            <person name="Ono T."/>
            <person name="Yamada K."/>
            <person name="Fujii Y."/>
            <person name="Ozaki K."/>
            <person name="Hirao M."/>
            <person name="Ohmori Y."/>
            <person name="Kawabata A."/>
            <person name="Hikiji T."/>
            <person name="Kobatake N."/>
            <person name="Inagaki H."/>
            <person name="Ikema Y."/>
            <person name="Okamoto S."/>
            <person name="Okitani R."/>
            <person name="Kawakami T."/>
            <person name="Noguchi S."/>
            <person name="Itoh T."/>
            <person name="Shigeta K."/>
            <person name="Senba T."/>
            <person name="Matsumura K."/>
            <person name="Nakajima Y."/>
            <person name="Mizuno T."/>
            <person name="Morinaga M."/>
            <person name="Sasaki M."/>
            <person name="Togashi T."/>
            <person name="Oyama M."/>
            <person name="Hata H."/>
            <person name="Watanabe M."/>
            <person name="Komatsu T."/>
            <person name="Mizushima-Sugano J."/>
            <person name="Satoh T."/>
            <person name="Shirai Y."/>
            <person name="Takahashi Y."/>
            <person name="Nakagawa K."/>
            <person name="Okumura K."/>
            <person name="Nagase T."/>
            <person name="Nomura N."/>
            <person name="Kikuchi H."/>
            <person name="Masuho Y."/>
            <person name="Yamashita R."/>
            <person name="Nakai K."/>
            <person name="Yada T."/>
            <person name="Nakamura Y."/>
            <person name="Ohara O."/>
            <person name="Isogai T."/>
            <person name="Sugano S."/>
        </authorList>
    </citation>
    <scope>NUCLEOTIDE SEQUENCE [LARGE SCALE MRNA]</scope>
    <source>
        <tissue>Thymus</tissue>
    </source>
</reference>
<reference key="4">
    <citation type="submission" date="2005-07" db="EMBL/GenBank/DDBJ databases">
        <authorList>
            <person name="Mural R.J."/>
            <person name="Istrail S."/>
            <person name="Sutton G.G."/>
            <person name="Florea L."/>
            <person name="Halpern A.L."/>
            <person name="Mobarry C.M."/>
            <person name="Lippert R."/>
            <person name="Walenz B."/>
            <person name="Shatkay H."/>
            <person name="Dew I."/>
            <person name="Miller J.R."/>
            <person name="Flanigan M.J."/>
            <person name="Edwards N.J."/>
            <person name="Bolanos R."/>
            <person name="Fasulo D."/>
            <person name="Halldorsson B.V."/>
            <person name="Hannenhalli S."/>
            <person name="Turner R."/>
            <person name="Yooseph S."/>
            <person name="Lu F."/>
            <person name="Nusskern D.R."/>
            <person name="Shue B.C."/>
            <person name="Zheng X.H."/>
            <person name="Zhong F."/>
            <person name="Delcher A.L."/>
            <person name="Huson D.H."/>
            <person name="Kravitz S.A."/>
            <person name="Mouchard L."/>
            <person name="Reinert K."/>
            <person name="Remington K.A."/>
            <person name="Clark A.G."/>
            <person name="Waterman M.S."/>
            <person name="Eichler E.E."/>
            <person name="Adams M.D."/>
            <person name="Hunkapiller M.W."/>
            <person name="Myers E.W."/>
            <person name="Venter J.C."/>
        </authorList>
    </citation>
    <scope>NUCLEOTIDE SEQUENCE [LARGE SCALE GENOMIC DNA]</scope>
</reference>
<reference key="5">
    <citation type="journal article" date="2004" name="Genome Res.">
        <title>The status, quality, and expansion of the NIH full-length cDNA project: the Mammalian Gene Collection (MGC).</title>
        <authorList>
            <consortium name="The MGC Project Team"/>
        </authorList>
    </citation>
    <scope>NUCLEOTIDE SEQUENCE [LARGE SCALE MRNA]</scope>
    <source>
        <tissue>Pancreas</tissue>
    </source>
</reference>
<reference key="6">
    <citation type="journal article" date="1988" name="J. Immunol.">
        <title>Characterization of three serine esterases isolated from human IL-2 activated killer cells.</title>
        <authorList>
            <person name="Hameed A."/>
            <person name="Lowrey D.M."/>
            <person name="Lichtenheld M."/>
            <person name="Podack E.R."/>
        </authorList>
    </citation>
    <scope>PROTEIN SEQUENCE OF 27-42</scope>
    <scope>CHARACTERIZATION</scope>
</reference>
<reference key="7">
    <citation type="journal article" date="1992" name="J. Exp. Med.">
        <title>Purification of three cytotoxic lymphocyte granule serine proteases that induce apoptosis through distinct substrate and target cell interactions.</title>
        <authorList>
            <person name="Shi L."/>
            <person name="Kam C.-M."/>
            <person name="Powers J.C."/>
            <person name="Aebersold R."/>
            <person name="Greenberg A.H."/>
        </authorList>
    </citation>
    <scope>PROTEIN SEQUENCE OF 27-48</scope>
</reference>
<reference key="8">
    <citation type="journal article" date="2002" name="J. Biol. Chem.">
        <title>The 2.2-A crystal structure of human pro-granzyme K reveals a rigid zymogen with unusual features.</title>
        <authorList>
            <person name="Hink-Schauer C."/>
            <person name="Estebanez-Perpina E."/>
            <person name="Wilharm E."/>
            <person name="Fuentes-Prior P."/>
            <person name="Klinkert W."/>
            <person name="Bode W."/>
            <person name="Jenne D.E."/>
        </authorList>
    </citation>
    <scope>X-RAY CRYSTALLOGRAPHY (2.2 ANGSTROMS) OF 25-264</scope>
</reference>
<name>GRAK_HUMAN</name>
<evidence type="ECO:0000255" key="1"/>
<evidence type="ECO:0000255" key="2">
    <source>
        <dbReference type="PROSITE-ProRule" id="PRU00274"/>
    </source>
</evidence>
<evidence type="ECO:0000269" key="3">
    <source>
    </source>
</evidence>
<evidence type="ECO:0000269" key="4">
    <source>
    </source>
</evidence>
<evidence type="ECO:0000305" key="5"/>
<evidence type="ECO:0007829" key="6">
    <source>
        <dbReference type="PDB" id="1MZA"/>
    </source>
</evidence>
<evidence type="ECO:0007829" key="7">
    <source>
        <dbReference type="PDB" id="1MZD"/>
    </source>
</evidence>
<sequence length="264" mass="28882">MTKFSSFSLFFLIVGAYMTHVCFNMEIIGGKEVSPHSRPFMASIQYGGHHVCGGVLIDPQWVLTAAHCQYRFTKGQSPTVVLGAHSLSKNEASKQTLEIKKFIPFSRVTSDPQSNDIMLVKLQTAAKLNKHVKMLHIRSKTSLRSGTKCKVTGWGATDPDSLRPSDTLREVTVTVLSRKLCNSQSYYNGDPFITKDMVCAGDAKGQKDSCKGDSGGPLICKGVFHAIVSGGHECGVATKPGIYTLLTKKYQTWIKSNLVPPHTN</sequence>
<feature type="signal peptide" evidence="1">
    <location>
        <begin position="1"/>
        <end position="24"/>
    </location>
</feature>
<feature type="propeptide" id="PRO_0000027415" description="Activation peptide" evidence="3 4">
    <location>
        <begin position="25"/>
        <end position="26"/>
    </location>
</feature>
<feature type="chain" id="PRO_0000027416" description="Granzyme K">
    <location>
        <begin position="27"/>
        <end position="264"/>
    </location>
</feature>
<feature type="domain" description="Peptidase S1" evidence="2">
    <location>
        <begin position="27"/>
        <end position="259"/>
    </location>
</feature>
<feature type="active site" description="Charge relay system">
    <location>
        <position position="67"/>
    </location>
</feature>
<feature type="active site" description="Charge relay system">
    <location>
        <position position="116"/>
    </location>
</feature>
<feature type="active site" description="Charge relay system">
    <location>
        <position position="214"/>
    </location>
</feature>
<feature type="disulfide bond">
    <location>
        <begin position="52"/>
        <end position="68"/>
    </location>
</feature>
<feature type="disulfide bond">
    <location>
        <begin position="149"/>
        <end position="220"/>
    </location>
</feature>
<feature type="disulfide bond">
    <location>
        <begin position="181"/>
        <end position="199"/>
    </location>
</feature>
<feature type="disulfide bond">
    <location>
        <begin position="210"/>
        <end position="234"/>
    </location>
</feature>
<feature type="sequence conflict" description="In Ref. 7; AA sequence." evidence="5" ref="7">
    <original>S</original>
    <variation>Q</variation>
    <location>
        <position position="34"/>
    </location>
</feature>
<feature type="sequence conflict" description="In Ref. 7; AA sequence." evidence="5" ref="7">
    <original>S</original>
    <variation>A</variation>
    <location>
        <position position="43"/>
    </location>
</feature>
<feature type="strand" evidence="6">
    <location>
        <begin position="41"/>
        <end position="46"/>
    </location>
</feature>
<feature type="strand" evidence="6">
    <location>
        <begin position="49"/>
        <end position="58"/>
    </location>
</feature>
<feature type="strand" evidence="6">
    <location>
        <begin position="61"/>
        <end position="64"/>
    </location>
</feature>
<feature type="helix" evidence="6">
    <location>
        <begin position="66"/>
        <end position="68"/>
    </location>
</feature>
<feature type="strand" evidence="6">
    <location>
        <begin position="78"/>
        <end position="83"/>
    </location>
</feature>
<feature type="strand" evidence="6">
    <location>
        <begin position="85"/>
        <end position="89"/>
    </location>
</feature>
<feature type="strand" evidence="6">
    <location>
        <begin position="95"/>
        <end position="104"/>
    </location>
</feature>
<feature type="strand" evidence="6">
    <location>
        <begin position="111"/>
        <end position="115"/>
    </location>
</feature>
<feature type="strand" evidence="6">
    <location>
        <begin position="118"/>
        <end position="124"/>
    </location>
</feature>
<feature type="strand" evidence="7">
    <location>
        <begin position="130"/>
        <end position="132"/>
    </location>
</feature>
<feature type="strand" evidence="6">
    <location>
        <begin position="148"/>
        <end position="153"/>
    </location>
</feature>
<feature type="strand" evidence="6">
    <location>
        <begin position="169"/>
        <end position="175"/>
    </location>
</feature>
<feature type="helix" evidence="6">
    <location>
        <begin position="178"/>
        <end position="181"/>
    </location>
</feature>
<feature type="turn" evidence="6">
    <location>
        <begin position="184"/>
        <end position="191"/>
    </location>
</feature>
<feature type="strand" evidence="6">
    <location>
        <begin position="197"/>
        <end position="201"/>
    </location>
</feature>
<feature type="strand" evidence="6">
    <location>
        <begin position="217"/>
        <end position="220"/>
    </location>
</feature>
<feature type="strand" evidence="6">
    <location>
        <begin position="223"/>
        <end position="228"/>
    </location>
</feature>
<feature type="strand" evidence="6">
    <location>
        <begin position="241"/>
        <end position="245"/>
    </location>
</feature>
<feature type="helix" evidence="6">
    <location>
        <begin position="248"/>
        <end position="257"/>
    </location>
</feature>